<keyword id="KW-0067">ATP-binding</keyword>
<keyword id="KW-1003">Cell membrane</keyword>
<keyword id="KW-0325">Glycoprotein</keyword>
<keyword id="KW-0472">Membrane</keyword>
<keyword id="KW-0547">Nucleotide-binding</keyword>
<keyword id="KW-1185">Reference proteome</keyword>
<keyword id="KW-0677">Repeat</keyword>
<keyword id="KW-0812">Transmembrane</keyword>
<keyword id="KW-1133">Transmembrane helix</keyword>
<keyword id="KW-0813">Transport</keyword>
<proteinExistence type="evidence at protein level"/>
<protein>
    <recommendedName>
        <fullName evidence="7">ABC multidrug transporter MDR3</fullName>
    </recommendedName>
    <alternativeName>
        <fullName evidence="7">Multidrug resistance protein 3</fullName>
    </alternativeName>
</protein>
<dbReference type="EMBL" id="GG700649">
    <property type="protein sequence ID" value="EGD85916.2"/>
    <property type="status" value="ALT_SEQ"/>
    <property type="molecule type" value="Genomic_DNA"/>
</dbReference>
<dbReference type="RefSeq" id="XP_003237465.1">
    <property type="nucleotide sequence ID" value="XM_003237417.1"/>
</dbReference>
<dbReference type="SMR" id="F2SG60"/>
<dbReference type="FunCoup" id="F2SG60">
    <property type="interactions" value="310"/>
</dbReference>
<dbReference type="STRING" id="559305.F2SG60"/>
<dbReference type="TCDB" id="3.A.1.205.32">
    <property type="family name" value="the atp-binding cassette (abc) superfamily"/>
</dbReference>
<dbReference type="GlyCosmos" id="F2SG60">
    <property type="glycosylation" value="5 sites, No reported glycans"/>
</dbReference>
<dbReference type="eggNOG" id="KOG0065">
    <property type="taxonomic scope" value="Eukaryota"/>
</dbReference>
<dbReference type="HOGENOM" id="CLU_000604_35_0_1"/>
<dbReference type="InParanoid" id="F2SG60"/>
<dbReference type="OrthoDB" id="245989at2759"/>
<dbReference type="Proteomes" id="UP000008864">
    <property type="component" value="Unassembled WGS sequence"/>
</dbReference>
<dbReference type="GO" id="GO:0005886">
    <property type="term" value="C:plasma membrane"/>
    <property type="evidence" value="ECO:0007669"/>
    <property type="project" value="UniProtKB-SubCell"/>
</dbReference>
<dbReference type="GO" id="GO:0140394">
    <property type="term" value="F:ABC-type azole transporter activity"/>
    <property type="evidence" value="ECO:0000315"/>
    <property type="project" value="PHI-base"/>
</dbReference>
<dbReference type="GO" id="GO:0005524">
    <property type="term" value="F:ATP binding"/>
    <property type="evidence" value="ECO:0007669"/>
    <property type="project" value="UniProtKB-KW"/>
</dbReference>
<dbReference type="GO" id="GO:0016887">
    <property type="term" value="F:ATP hydrolysis activity"/>
    <property type="evidence" value="ECO:0007669"/>
    <property type="project" value="InterPro"/>
</dbReference>
<dbReference type="GO" id="GO:1990961">
    <property type="term" value="P:xenobiotic detoxification by transmembrane export across the plasma membrane"/>
    <property type="evidence" value="ECO:0000315"/>
    <property type="project" value="PHI-base"/>
</dbReference>
<dbReference type="CDD" id="cd03233">
    <property type="entry name" value="ABCG_PDR_domain1"/>
    <property type="match status" value="1"/>
</dbReference>
<dbReference type="CDD" id="cd03232">
    <property type="entry name" value="ABCG_PDR_domain2"/>
    <property type="match status" value="1"/>
</dbReference>
<dbReference type="FunFam" id="3.40.50.300:FF:000881">
    <property type="entry name" value="ABC multidrug transporter A-1"/>
    <property type="match status" value="1"/>
</dbReference>
<dbReference type="FunFam" id="3.40.50.300:FF:000054">
    <property type="entry name" value="ABC multidrug transporter atrF"/>
    <property type="match status" value="1"/>
</dbReference>
<dbReference type="Gene3D" id="3.40.50.300">
    <property type="entry name" value="P-loop containing nucleotide triphosphate hydrolases"/>
    <property type="match status" value="2"/>
</dbReference>
<dbReference type="InterPro" id="IPR003593">
    <property type="entry name" value="AAA+_ATPase"/>
</dbReference>
<dbReference type="InterPro" id="IPR013525">
    <property type="entry name" value="ABC2_TM"/>
</dbReference>
<dbReference type="InterPro" id="IPR029481">
    <property type="entry name" value="ABC_trans_N"/>
</dbReference>
<dbReference type="InterPro" id="IPR003439">
    <property type="entry name" value="ABC_transporter-like_ATP-bd"/>
</dbReference>
<dbReference type="InterPro" id="IPR017871">
    <property type="entry name" value="ABC_transporter-like_CS"/>
</dbReference>
<dbReference type="InterPro" id="IPR043926">
    <property type="entry name" value="ABCG_dom"/>
</dbReference>
<dbReference type="InterPro" id="IPR034001">
    <property type="entry name" value="ABCG_PDR_1"/>
</dbReference>
<dbReference type="InterPro" id="IPR034003">
    <property type="entry name" value="ABCG_PDR_2"/>
</dbReference>
<dbReference type="InterPro" id="IPR005285">
    <property type="entry name" value="Drug-R_PDR/CDR"/>
</dbReference>
<dbReference type="InterPro" id="IPR027417">
    <property type="entry name" value="P-loop_NTPase"/>
</dbReference>
<dbReference type="InterPro" id="IPR010929">
    <property type="entry name" value="PDR_CDR_ABC"/>
</dbReference>
<dbReference type="NCBIfam" id="TIGR00956">
    <property type="entry name" value="3a01205"/>
    <property type="match status" value="1"/>
</dbReference>
<dbReference type="PANTHER" id="PTHR19241">
    <property type="entry name" value="ATP-BINDING CASSETTE TRANSPORTER"/>
    <property type="match status" value="1"/>
</dbReference>
<dbReference type="Pfam" id="PF01061">
    <property type="entry name" value="ABC2_membrane"/>
    <property type="match status" value="2"/>
</dbReference>
<dbReference type="Pfam" id="PF19055">
    <property type="entry name" value="ABC2_membrane_7"/>
    <property type="match status" value="1"/>
</dbReference>
<dbReference type="Pfam" id="PF00005">
    <property type="entry name" value="ABC_tran"/>
    <property type="match status" value="2"/>
</dbReference>
<dbReference type="Pfam" id="PF14510">
    <property type="entry name" value="ABC_trans_N"/>
    <property type="match status" value="1"/>
</dbReference>
<dbReference type="Pfam" id="PF06422">
    <property type="entry name" value="PDR_CDR"/>
    <property type="match status" value="1"/>
</dbReference>
<dbReference type="SMART" id="SM00382">
    <property type="entry name" value="AAA"/>
    <property type="match status" value="2"/>
</dbReference>
<dbReference type="SUPFAM" id="SSF52540">
    <property type="entry name" value="P-loop containing nucleoside triphosphate hydrolases"/>
    <property type="match status" value="2"/>
</dbReference>
<dbReference type="PROSITE" id="PS00211">
    <property type="entry name" value="ABC_TRANSPORTER_1"/>
    <property type="match status" value="1"/>
</dbReference>
<dbReference type="PROSITE" id="PS50893">
    <property type="entry name" value="ABC_TRANSPORTER_2"/>
    <property type="match status" value="2"/>
</dbReference>
<sequence>MAPTEEANVTKPTGELRPDEKLNYEEDVKCSGSSSTTVGKTAYDTDDISQSQAAELQDLARQLSRASRQGGLDVENEPQQVINPFLDSESDPELNPDSKSFNVAKWLKTILQITSRDPERFPKRTAGVSFRNMNVHGYGTAADYQSDVGNLPLKAWSGIMSMLGLRKKVRIDILRDFEGLVKSGEMLVVLGRPGSGCSTLLRTLSGETHGLYLDEGNDIQYQGISWEQMHKNFRGEVIYQAETETHFPQMTVGDTLYFAARARAPANRLPGVSREQYAIHMRSMVMSMLSLSHTINTQVGNEYIRGVSGGERKRISIAETTLSGSPLQCWDNSTRGLDSANALEFVKSLRLSTKYSGTTAIVAIYQAGQAIYDIFDKAVVLYEGHQIYFGNAVRAKEYFIEMGFDCPSRQTTADFLTSVTSPSERRVRPGYESRVPQTPAEFAQRWKESEDRRILMQEIDEYNKTYPLHGEQLQKFQASRLAEKSRSTSKSSPYTLSYPMEIKLCMWRGFQRLKGDMSMTLTSIIGNIAMSLIIASVFYNQQETTDSFFSRGSLLFFAILMNAFASSLEILTLWHQRPIVEKHDKYALYHPSSEAISSILVDMPAKLAVAIVFNLIIYFMTNLRRTPGHFFIFFLFSFTTTLTMSNVFRSIAAVSRTLSQALVPTSIFMLALVIYTGFTIPVRDMRPWFKWISYINPIQYAFESLMINEFHDREFKCAVYIPSGPGYSNVSGTSKICAAKGAMAGKPTVSGDVFLRETYSYYASHMWRNYGIIVAFFLFFLFVYITATELVSAKPSKGEILVFPKGKVPAFLKQSKKKQDPEAASTQEKQPVETSGHDQTAAIVKQTSVFHWESVCYDIKIKKESRRILDNVDGWVKPGTLTALMGVSGAGKTTLLDVLANRVTMGVVTGEMLVDGRLRDDSFQRKTGYVQQQDLHLEISTVREALTFSALLRQPNTTPYEEKVAYVEEVIKMLGMEEYANAVVGVLGEGLNVEQRKRLTIGVEIAAKPDLLLFFDEPTSGLDSQTAWSICTLMRKLADHGQAVLCTIHQPSAMLMQEFDRLLFLASGGRTVYFGELGKHMSTLIEYFESKGAPKCPPDANPAEWMLEVIGAAPGSKTDIDWPAVWRDSAERVEVRRHLAELKSELSQKPQTPRLTGYGEFAMPLWKQYLIVQHRMFQQYWRSPDYIYSKACLAIVPTLFIGFTFYKEQVSLQGIQNQMFAIFMFMILFPNLVQQMMPYFVIQRSLYEVRERPSKTYSWIAFMISSVVVEIPWNALLTVPAFFCWYYPIGFYKNAIPTDAVTERSGTMFLLILIFLMFSSTFSSMVIAGIEQAETGGNIAQLCFSLTLVFCGVLVSPTAMPGFWIFMYRLSPFTYFVSAVLSTGVGRTDIVCAANEILRLTPAAGQTCMEYLGPYTKFAGGRILTPDATDMCEFCAVADTDTFLKGVNIIFDERWRNIGILFGYIAFNMVGAIGLYWLLRVPKRKSGVKQGQQPQKQANETKA</sequence>
<accession>F2SG60</accession>
<comment type="function">
    <text evidence="5 6">Pleiotropic ABC efflux transporter involved in the modulation susceptibility to azoles, including fluconazole, itraconazole, ketoconazole, miconazole and voriconazole.</text>
</comment>
<comment type="catalytic activity">
    <reaction evidence="5">
        <text>itraconazole(in) + ATP + H2O = itraconazole(out) + ADP + phosphate + H(+)</text>
        <dbReference type="Rhea" id="RHEA:33503"/>
        <dbReference type="ChEBI" id="CHEBI:6076"/>
        <dbReference type="ChEBI" id="CHEBI:15377"/>
        <dbReference type="ChEBI" id="CHEBI:15378"/>
        <dbReference type="ChEBI" id="CHEBI:30616"/>
        <dbReference type="ChEBI" id="CHEBI:43474"/>
        <dbReference type="ChEBI" id="CHEBI:456216"/>
    </reaction>
    <physiologicalReaction direction="left-to-right" evidence="5">
        <dbReference type="Rhea" id="RHEA:33504"/>
    </physiologicalReaction>
</comment>
<comment type="catalytic activity">
    <reaction evidence="5">
        <text>voriconazole(in) + ATP + H2O = voriconazole(out) + ADP + phosphate + H(+)</text>
        <dbReference type="Rhea" id="RHEA:61912"/>
        <dbReference type="ChEBI" id="CHEBI:10023"/>
        <dbReference type="ChEBI" id="CHEBI:15377"/>
        <dbReference type="ChEBI" id="CHEBI:15378"/>
        <dbReference type="ChEBI" id="CHEBI:30616"/>
        <dbReference type="ChEBI" id="CHEBI:43474"/>
        <dbReference type="ChEBI" id="CHEBI:456216"/>
    </reaction>
    <physiologicalReaction direction="left-to-right" evidence="5">
        <dbReference type="Rhea" id="RHEA:61913"/>
    </physiologicalReaction>
</comment>
<comment type="catalytic activity">
    <reaction evidence="5">
        <text>fluconazole(in) + ATP + H2O = fluconazole(out) + ADP + phosphate + H(+)</text>
        <dbReference type="Rhea" id="RHEA:61916"/>
        <dbReference type="ChEBI" id="CHEBI:15377"/>
        <dbReference type="ChEBI" id="CHEBI:15378"/>
        <dbReference type="ChEBI" id="CHEBI:30616"/>
        <dbReference type="ChEBI" id="CHEBI:43474"/>
        <dbReference type="ChEBI" id="CHEBI:46081"/>
        <dbReference type="ChEBI" id="CHEBI:456216"/>
    </reaction>
    <physiologicalReaction direction="left-to-right" evidence="5">
        <dbReference type="Rhea" id="RHEA:61917"/>
    </physiologicalReaction>
</comment>
<comment type="catalytic activity">
    <reaction evidence="5">
        <text>(2R,4S)-ketoconazole(in) + ATP + H2O = (2R,4S)-ketoconazole(out) + ADP + phosphate + H(+)</text>
        <dbReference type="Rhea" id="RHEA:61920"/>
        <dbReference type="ChEBI" id="CHEBI:15377"/>
        <dbReference type="ChEBI" id="CHEBI:15378"/>
        <dbReference type="ChEBI" id="CHEBI:30616"/>
        <dbReference type="ChEBI" id="CHEBI:43474"/>
        <dbReference type="ChEBI" id="CHEBI:48336"/>
        <dbReference type="ChEBI" id="CHEBI:456216"/>
    </reaction>
    <physiologicalReaction direction="left-to-right" evidence="5">
        <dbReference type="Rhea" id="RHEA:61921"/>
    </physiologicalReaction>
</comment>
<comment type="catalytic activity">
    <reaction evidence="5">
        <text>(2S,4R)-ketoconazole(in) + ATP + H2O = (2S,4R)-ketoconazole(out) + ADP + phosphate + H(+)</text>
        <dbReference type="Rhea" id="RHEA:61924"/>
        <dbReference type="ChEBI" id="CHEBI:15377"/>
        <dbReference type="ChEBI" id="CHEBI:15378"/>
        <dbReference type="ChEBI" id="CHEBI:30616"/>
        <dbReference type="ChEBI" id="CHEBI:43474"/>
        <dbReference type="ChEBI" id="CHEBI:47518"/>
        <dbReference type="ChEBI" id="CHEBI:456216"/>
    </reaction>
    <physiologicalReaction direction="left-to-right" evidence="5">
        <dbReference type="Rhea" id="RHEA:61925"/>
    </physiologicalReaction>
</comment>
<comment type="catalytic activity">
    <reaction evidence="5">
        <text>(R)-miconazole(in) + ATP + H2O = (R)-miconazole(out) + ADP + phosphate + H(+)</text>
        <dbReference type="Rhea" id="RHEA:61928"/>
        <dbReference type="ChEBI" id="CHEBI:15377"/>
        <dbReference type="ChEBI" id="CHEBI:15378"/>
        <dbReference type="ChEBI" id="CHEBI:30616"/>
        <dbReference type="ChEBI" id="CHEBI:43474"/>
        <dbReference type="ChEBI" id="CHEBI:82894"/>
        <dbReference type="ChEBI" id="CHEBI:456216"/>
    </reaction>
    <physiologicalReaction direction="left-to-right" evidence="5">
        <dbReference type="Rhea" id="RHEA:61929"/>
    </physiologicalReaction>
</comment>
<comment type="catalytic activity">
    <reaction evidence="5">
        <text>(S)-miconazole(in) + ATP + H2O = (S)-miconazole(out) + ADP + phosphate + H(+)</text>
        <dbReference type="Rhea" id="RHEA:61932"/>
        <dbReference type="ChEBI" id="CHEBI:15377"/>
        <dbReference type="ChEBI" id="CHEBI:15378"/>
        <dbReference type="ChEBI" id="CHEBI:30616"/>
        <dbReference type="ChEBI" id="CHEBI:43474"/>
        <dbReference type="ChEBI" id="CHEBI:82897"/>
        <dbReference type="ChEBI" id="CHEBI:456216"/>
    </reaction>
    <physiologicalReaction direction="left-to-right" evidence="5">
        <dbReference type="Rhea" id="RHEA:61933"/>
    </physiologicalReaction>
</comment>
<comment type="activity regulation">
    <text evidence="5">Azole transport activity is inhibited by milbemycin oxime.</text>
</comment>
<comment type="subcellular location">
    <subcellularLocation>
        <location evidence="9">Cell membrane</location>
        <topology evidence="1">Multi-pass membrane protein</topology>
    </subcellularLocation>
</comment>
<comment type="induction">
    <text evidence="5">Expression is highly induced upon exposure to voriconazole and itraconazole (PubMed:31501141). Is highly over-expressed in strain TIMM20092, an azole-resistant strain isolated in Switzerland (PubMed:31501141).</text>
</comment>
<comment type="disruption phenotype">
    <text evidence="5 6">Impairs the resistance to voriconazole and decreases the resistance to itraconazole of the azole-resistant strain TIMM20092.</text>
</comment>
<comment type="miscellaneous">
    <text evidence="5 6">Dermatophytes showing reduced sensitivity to antifungal agents have emerged in several countries and, in particular, up-regulation of MDR3 expression in some clinical isolates such as strain TIMM20092 leads to increased resistance to voriconazole, and to a lesser extend itraconazole, during clinical treatments.</text>
</comment>
<comment type="similarity">
    <text evidence="8">Belongs to the ABC transporter superfamily. ABCG family. PDR (TC 3.A.1.205) subfamily.</text>
</comment>
<comment type="sequence caution" evidence="5">
    <conflict type="erroneous gene model prediction">
        <sequence resource="EMBL-CDS" id="EGD85916"/>
    </conflict>
</comment>
<comment type="online information" name="Protein Spotlight">
    <link uri="https://www.proteinspotlight.org/back_issues/221/"/>
    <text>Backlash - Issue 221 of January 2020</text>
</comment>
<organism>
    <name type="scientific">Trichophyton rubrum (strain ATCC MYA-4607 / CBS 118892)</name>
    <name type="common">Athlete's foot fungus</name>
    <dbReference type="NCBI Taxonomy" id="559305"/>
    <lineage>
        <taxon>Eukaryota</taxon>
        <taxon>Fungi</taxon>
        <taxon>Dikarya</taxon>
        <taxon>Ascomycota</taxon>
        <taxon>Pezizomycotina</taxon>
        <taxon>Eurotiomycetes</taxon>
        <taxon>Eurotiomycetidae</taxon>
        <taxon>Onygenales</taxon>
        <taxon>Arthrodermataceae</taxon>
        <taxon>Trichophyton</taxon>
    </lineage>
</organism>
<gene>
    <name evidence="7" type="primary">MDR3</name>
    <name type="ORF">TERG_02186</name>
</gene>
<evidence type="ECO:0000255" key="1"/>
<evidence type="ECO:0000255" key="2">
    <source>
        <dbReference type="PROSITE-ProRule" id="PRU00434"/>
    </source>
</evidence>
<evidence type="ECO:0000255" key="3">
    <source>
        <dbReference type="PROSITE-ProRule" id="PRU00498"/>
    </source>
</evidence>
<evidence type="ECO:0000256" key="4">
    <source>
        <dbReference type="SAM" id="MobiDB-lite"/>
    </source>
</evidence>
<evidence type="ECO:0000269" key="5">
    <source>
    </source>
</evidence>
<evidence type="ECO:0000269" key="6">
    <source>
    </source>
</evidence>
<evidence type="ECO:0000303" key="7">
    <source>
    </source>
</evidence>
<evidence type="ECO:0000305" key="8"/>
<evidence type="ECO:0000305" key="9">
    <source>
    </source>
</evidence>
<name>MDR3_TRIRC</name>
<reference key="1">
    <citation type="journal article" date="2012" name="MBio">
        <title>Comparative genome analysis of Trichophyton rubrum and related dermatophytes reveals candidate genes involved in infection.</title>
        <authorList>
            <person name="Martinez D.A."/>
            <person name="Oliver B.G."/>
            <person name="Graeser Y."/>
            <person name="Goldberg J.M."/>
            <person name="Li W."/>
            <person name="Martinez-Rossi N.M."/>
            <person name="Monod M."/>
            <person name="Shelest E."/>
            <person name="Barton R.C."/>
            <person name="Birch E."/>
            <person name="Brakhage A.A."/>
            <person name="Chen Z."/>
            <person name="Gurr S.J."/>
            <person name="Heiman D."/>
            <person name="Heitman J."/>
            <person name="Kosti I."/>
            <person name="Rossi A."/>
            <person name="Saif S."/>
            <person name="Samalova M."/>
            <person name="Saunders C.W."/>
            <person name="Shea T."/>
            <person name="Summerbell R.C."/>
            <person name="Xu J."/>
            <person name="Young S."/>
            <person name="Zeng Q."/>
            <person name="Birren B.W."/>
            <person name="Cuomo C.A."/>
            <person name="White T.C."/>
        </authorList>
    </citation>
    <scope>NUCLEOTIDE SEQUENCE [LARGE SCALE GENOMIC DNA]</scope>
    <source>
        <strain>ATCC MYA-4607 / CBS 118892</strain>
    </source>
</reference>
<reference key="2">
    <citation type="journal article" date="2019" name="Antimicrob. Agents Chemother.">
        <title>Trichophyton rubrum azole resistance mediated by a new ABC transporter, TruMDR3.</title>
        <authorList>
            <person name="Monod M."/>
            <person name="Feuermann M."/>
            <person name="Salamin K."/>
            <person name="Fratti M."/>
            <person name="Makino M."/>
            <person name="Alshahni M.M."/>
            <person name="Makimura K."/>
            <person name="Yamada T."/>
        </authorList>
    </citation>
    <scope>IDENTIFICATION</scope>
    <scope>GENE MODEL REVISION</scope>
    <scope>FUNCTION</scope>
    <scope>INDUCTION</scope>
    <scope>CATALYTIC ACTIVITY</scope>
    <scope>ACTIVITY REGULATION</scope>
    <scope>DISRUPTION PHENOTYPE</scope>
</reference>
<reference key="3">
    <citation type="journal article" date="2021" name="Mycoses">
        <title>Itraconazole resistance of Trichophyton rubrum mediated by the ABC transporter TruMDR2.</title>
        <authorList>
            <person name="Yamada T."/>
            <person name="Yaguchi T."/>
            <person name="Tamura T."/>
            <person name="Pich C."/>
            <person name="Salamin K."/>
            <person name="Feuermann M."/>
            <person name="Monod M."/>
        </authorList>
    </citation>
    <scope>FUNCTION</scope>
    <scope>DISRUPTION PHENOTYPE</scope>
</reference>
<feature type="chain" id="PRO_0000448444" description="ABC multidrug transporter MDR3">
    <location>
        <begin position="1"/>
        <end position="1503"/>
    </location>
</feature>
<feature type="transmembrane region" description="Helical" evidence="1">
    <location>
        <begin position="519"/>
        <end position="539"/>
    </location>
</feature>
<feature type="transmembrane region" description="Helical" evidence="1">
    <location>
        <begin position="554"/>
        <end position="574"/>
    </location>
</feature>
<feature type="transmembrane region" description="Helical" evidence="1">
    <location>
        <begin position="599"/>
        <end position="619"/>
    </location>
</feature>
<feature type="transmembrane region" description="Helical" evidence="1">
    <location>
        <begin position="628"/>
        <end position="648"/>
    </location>
</feature>
<feature type="transmembrane region" description="Helical" evidence="1">
    <location>
        <begin position="662"/>
        <end position="682"/>
    </location>
</feature>
<feature type="transmembrane region" description="Helical" evidence="1">
    <location>
        <begin position="771"/>
        <end position="791"/>
    </location>
</feature>
<feature type="transmembrane region" description="Helical" evidence="1">
    <location>
        <begin position="1186"/>
        <end position="1206"/>
    </location>
</feature>
<feature type="transmembrane region" description="Helical" evidence="1">
    <location>
        <begin position="1222"/>
        <end position="1242"/>
    </location>
</feature>
<feature type="transmembrane region" description="Helical" evidence="1">
    <location>
        <begin position="1259"/>
        <end position="1279"/>
    </location>
</feature>
<feature type="transmembrane region" description="Helical" evidence="1">
    <location>
        <begin position="1310"/>
        <end position="1330"/>
    </location>
</feature>
<feature type="transmembrane region" description="Helical" evidence="1">
    <location>
        <begin position="1346"/>
        <end position="1366"/>
    </location>
</feature>
<feature type="transmembrane region" description="Helical" evidence="1">
    <location>
        <begin position="1458"/>
        <end position="1478"/>
    </location>
</feature>
<feature type="domain" description="ABC transporter 1" evidence="2">
    <location>
        <begin position="153"/>
        <end position="408"/>
    </location>
</feature>
<feature type="domain" description="ABC transporter 2" evidence="2">
    <location>
        <begin position="850"/>
        <end position="1093"/>
    </location>
</feature>
<feature type="region of interest" description="Disordered" evidence="4">
    <location>
        <begin position="1"/>
        <end position="46"/>
    </location>
</feature>
<feature type="region of interest" description="Disordered" evidence="4">
    <location>
        <begin position="816"/>
        <end position="838"/>
    </location>
</feature>
<feature type="compositionally biased region" description="Basic and acidic residues" evidence="4">
    <location>
        <begin position="14"/>
        <end position="29"/>
    </location>
</feature>
<feature type="compositionally biased region" description="Polar residues" evidence="4">
    <location>
        <begin position="824"/>
        <end position="833"/>
    </location>
</feature>
<feature type="binding site" evidence="2">
    <location>
        <begin position="886"/>
        <end position="893"/>
    </location>
    <ligand>
        <name>ATP</name>
        <dbReference type="ChEBI" id="CHEBI:30616"/>
    </ligand>
</feature>
<feature type="glycosylation site" description="N-linked (GlcNAc...) asparagine" evidence="3">
    <location>
        <position position="8"/>
    </location>
</feature>
<feature type="glycosylation site" description="N-linked (GlcNAc...) asparagine" evidence="3">
    <location>
        <position position="332"/>
    </location>
</feature>
<feature type="glycosylation site" description="N-linked (GlcNAc...) asparagine" evidence="3">
    <location>
        <position position="463"/>
    </location>
</feature>
<feature type="glycosylation site" description="N-linked (GlcNAc...) asparagine" evidence="3">
    <location>
        <position position="729"/>
    </location>
</feature>
<feature type="glycosylation site" description="N-linked (GlcNAc...) asparagine" evidence="3">
    <location>
        <position position="1499"/>
    </location>
</feature>